<gene>
    <name evidence="1" type="primary">hpf</name>
    <name type="ordered locus">SACOL0815</name>
</gene>
<reference key="1">
    <citation type="journal article" date="2005" name="J. Bacteriol.">
        <title>Insights on evolution of virulence and resistance from the complete genome analysis of an early methicillin-resistant Staphylococcus aureus strain and a biofilm-producing methicillin-resistant Staphylococcus epidermidis strain.</title>
        <authorList>
            <person name="Gill S.R."/>
            <person name="Fouts D.E."/>
            <person name="Archer G.L."/>
            <person name="Mongodin E.F."/>
            <person name="DeBoy R.T."/>
            <person name="Ravel J."/>
            <person name="Paulsen I.T."/>
            <person name="Kolonay J.F."/>
            <person name="Brinkac L.M."/>
            <person name="Beanan M.J."/>
            <person name="Dodson R.J."/>
            <person name="Daugherty S.C."/>
            <person name="Madupu R."/>
            <person name="Angiuoli S.V."/>
            <person name="Durkin A.S."/>
            <person name="Haft D.H."/>
            <person name="Vamathevan J.J."/>
            <person name="Khouri H."/>
            <person name="Utterback T.R."/>
            <person name="Lee C."/>
            <person name="Dimitrov G."/>
            <person name="Jiang L."/>
            <person name="Qin H."/>
            <person name="Weidman J."/>
            <person name="Tran K."/>
            <person name="Kang K.H."/>
            <person name="Hance I.R."/>
            <person name="Nelson K.E."/>
            <person name="Fraser C.M."/>
        </authorList>
    </citation>
    <scope>NUCLEOTIDE SEQUENCE [LARGE SCALE GENOMIC DNA]</scope>
    <source>
        <strain>COL</strain>
    </source>
</reference>
<sequence length="190" mass="22225">MIRFEIHGDNLTITDAIRNYIEEKIGKLERYFNDVPNAVAHVKVKTYSNSATKIEVTIPLKNVTLRAEERNDDLYAGIDLINNKLERQVRKYKTRINRKSRDRGDQEVFVAELQEMQETQVDNDAYDDNEIEIIRSKEFSLKPMDSEEAVLQMNLLGHDFFVFIDRETDGTSIVYRRKDGKYGLIQTSEQ</sequence>
<dbReference type="EMBL" id="CP000046">
    <property type="protein sequence ID" value="AAW36371.1"/>
    <property type="molecule type" value="Genomic_DNA"/>
</dbReference>
<dbReference type="RefSeq" id="WP_000617732.1">
    <property type="nucleotide sequence ID" value="NC_002951.2"/>
</dbReference>
<dbReference type="SMR" id="Q5HHR8"/>
<dbReference type="KEGG" id="sac:SACOL0815"/>
<dbReference type="HOGENOM" id="CLU_071472_0_3_9"/>
<dbReference type="Proteomes" id="UP000000530">
    <property type="component" value="Chromosome"/>
</dbReference>
<dbReference type="GO" id="GO:0022627">
    <property type="term" value="C:cytosolic small ribosomal subunit"/>
    <property type="evidence" value="ECO:0007669"/>
    <property type="project" value="TreeGrafter"/>
</dbReference>
<dbReference type="GO" id="GO:0043024">
    <property type="term" value="F:ribosomal small subunit binding"/>
    <property type="evidence" value="ECO:0007669"/>
    <property type="project" value="TreeGrafter"/>
</dbReference>
<dbReference type="GO" id="GO:0045900">
    <property type="term" value="P:negative regulation of translational elongation"/>
    <property type="evidence" value="ECO:0007669"/>
    <property type="project" value="TreeGrafter"/>
</dbReference>
<dbReference type="CDD" id="cd00552">
    <property type="entry name" value="RaiA"/>
    <property type="match status" value="1"/>
</dbReference>
<dbReference type="FunFam" id="3.30.160.100:FF:000003">
    <property type="entry name" value="Ribosome hibernation promoting factor"/>
    <property type="match status" value="1"/>
</dbReference>
<dbReference type="FunFam" id="3.30.505.50:FF:000001">
    <property type="entry name" value="Ribosome hibernation promoting factor"/>
    <property type="match status" value="1"/>
</dbReference>
<dbReference type="Gene3D" id="3.30.160.100">
    <property type="entry name" value="Ribosome hibernation promotion factor-like"/>
    <property type="match status" value="1"/>
</dbReference>
<dbReference type="Gene3D" id="3.30.505.50">
    <property type="entry name" value="Sigma 54 modulation/S30EA ribosomal protein, C-terminal domain"/>
    <property type="match status" value="1"/>
</dbReference>
<dbReference type="HAMAP" id="MF_00839">
    <property type="entry name" value="HPF"/>
    <property type="match status" value="1"/>
</dbReference>
<dbReference type="InterPro" id="IPR050574">
    <property type="entry name" value="HPF/YfiA_ribosome-assoc"/>
</dbReference>
<dbReference type="InterPro" id="IPR034694">
    <property type="entry name" value="HPF_long/plastid"/>
</dbReference>
<dbReference type="InterPro" id="IPR036567">
    <property type="entry name" value="RHF-like"/>
</dbReference>
<dbReference type="InterPro" id="IPR003489">
    <property type="entry name" value="RHF/RaiA"/>
</dbReference>
<dbReference type="InterPro" id="IPR032528">
    <property type="entry name" value="Ribosom_S30AE_C"/>
</dbReference>
<dbReference type="InterPro" id="IPR038416">
    <property type="entry name" value="Ribosom_S30AE_C_sf"/>
</dbReference>
<dbReference type="NCBIfam" id="TIGR00741">
    <property type="entry name" value="yfiA"/>
    <property type="match status" value="1"/>
</dbReference>
<dbReference type="PANTHER" id="PTHR33231">
    <property type="entry name" value="30S RIBOSOMAL PROTEIN"/>
    <property type="match status" value="1"/>
</dbReference>
<dbReference type="PANTHER" id="PTHR33231:SF1">
    <property type="entry name" value="30S RIBOSOMAL PROTEIN"/>
    <property type="match status" value="1"/>
</dbReference>
<dbReference type="Pfam" id="PF16321">
    <property type="entry name" value="Ribosom_S30AE_C"/>
    <property type="match status" value="1"/>
</dbReference>
<dbReference type="Pfam" id="PF02482">
    <property type="entry name" value="Ribosomal_S30AE"/>
    <property type="match status" value="1"/>
</dbReference>
<dbReference type="SUPFAM" id="SSF69754">
    <property type="entry name" value="Ribosome binding protein Y (YfiA homologue)"/>
    <property type="match status" value="1"/>
</dbReference>
<accession>Q5HHR8</accession>
<keyword id="KW-0963">Cytoplasm</keyword>
<keyword id="KW-0810">Translation regulation</keyword>
<proteinExistence type="inferred from homology"/>
<organism>
    <name type="scientific">Staphylococcus aureus (strain COL)</name>
    <dbReference type="NCBI Taxonomy" id="93062"/>
    <lineage>
        <taxon>Bacteria</taxon>
        <taxon>Bacillati</taxon>
        <taxon>Bacillota</taxon>
        <taxon>Bacilli</taxon>
        <taxon>Bacillales</taxon>
        <taxon>Staphylococcaceae</taxon>
        <taxon>Staphylococcus</taxon>
    </lineage>
</organism>
<name>HPF_STAAC</name>
<feature type="chain" id="PRO_0000291313" description="Ribosome hibernation promotion factor">
    <location>
        <begin position="1"/>
        <end position="190"/>
    </location>
</feature>
<evidence type="ECO:0000255" key="1">
    <source>
        <dbReference type="HAMAP-Rule" id="MF_00839"/>
    </source>
</evidence>
<protein>
    <recommendedName>
        <fullName evidence="1">Ribosome hibernation promotion factor</fullName>
        <shortName evidence="1">HPF</shortName>
    </recommendedName>
</protein>
<comment type="function">
    <text evidence="1">Required for dimerization of active 70S ribosomes into 100S ribosomes in stationary phase; 100S ribosomes are translationally inactive and sometimes present during exponential growth.</text>
</comment>
<comment type="subunit">
    <text evidence="1">Interacts with 100S ribosomes.</text>
</comment>
<comment type="subcellular location">
    <subcellularLocation>
        <location evidence="1">Cytoplasm</location>
    </subcellularLocation>
</comment>
<comment type="similarity">
    <text evidence="1">Belongs to the HPF/YfiA ribosome-associated protein family. Long HPF subfamily.</text>
</comment>